<feature type="initiator methionine" description="Removed" evidence="25">
    <location>
        <position position="1"/>
    </location>
</feature>
<feature type="chain" id="PRO_0000145243" description="DNA gyrase subunit A">
    <location>
        <begin position="2"/>
        <end position="838"/>
    </location>
</feature>
<feature type="domain" description="Topo IIA-type catalytic" evidence="2">
    <location>
        <begin position="41"/>
        <end position="510"/>
    </location>
</feature>
<feature type="domain" description="EF-hand" evidence="23">
    <location>
        <begin position="504"/>
        <end position="516"/>
    </location>
</feature>
<feature type="region of interest" description="C-terminal domain CTD" evidence="18 19">
    <location>
        <begin position="514"/>
        <end position="838"/>
    </location>
</feature>
<feature type="short sequence motif" description="GyrA-box" evidence="1 19">
    <location>
        <begin position="537"/>
        <end position="543"/>
    </location>
</feature>
<feature type="short sequence motif" description="GyrA-box-1" evidence="19">
    <location>
        <begin position="743"/>
        <end position="749"/>
    </location>
</feature>
<feature type="active site" description="O-(5'-phospho-DNA)-tyrosine intermediate" evidence="1">
    <location>
        <position position="129"/>
    </location>
</feature>
<feature type="binding site" evidence="3">
    <location>
        <position position="504"/>
    </location>
    <ligand>
        <name>Ca(2+)</name>
        <dbReference type="ChEBI" id="CHEBI:29108"/>
    </ligand>
</feature>
<feature type="binding site" evidence="3">
    <location>
        <position position="506"/>
    </location>
    <ligand>
        <name>Ca(2+)</name>
        <dbReference type="ChEBI" id="CHEBI:29108"/>
    </ligand>
</feature>
<feature type="binding site" evidence="3">
    <location>
        <position position="508"/>
    </location>
    <ligand>
        <name>Ca(2+)</name>
        <dbReference type="ChEBI" id="CHEBI:29108"/>
    </ligand>
</feature>
<feature type="binding site" evidence="3">
    <location>
        <position position="515"/>
    </location>
    <ligand>
        <name>Ca(2+)</name>
        <dbReference type="ChEBI" id="CHEBI:29108"/>
    </ligand>
</feature>
<feature type="modified residue" description="N-acetylthreonine" evidence="25">
    <location>
        <position position="2"/>
    </location>
</feature>
<feature type="sequence variant" description="Confers ciprofloxacin resistance, in clinical isolate." evidence="16">
    <original>A</original>
    <variation>V</variation>
    <location>
        <position position="90"/>
    </location>
</feature>
<feature type="sequence variant" description="Confers ciprofloxacin resistance, in clinical isolate." evidence="16">
    <original>S</original>
    <variation>P</variation>
    <location>
        <position position="91"/>
    </location>
</feature>
<feature type="sequence variant" description="Confers ciprofloxacin resistance, in clinical isolate." evidence="16">
    <original>D</original>
    <variation>A</variation>
    <location>
        <position position="94"/>
    </location>
</feature>
<feature type="sequence variant" description="Confers ciprofloxacin resistance, in clinical isolate." evidence="16">
    <original>D</original>
    <variation>G</variation>
    <location>
        <position position="94"/>
    </location>
</feature>
<feature type="sequence variant" description="Confers ciprofloxacin resistance, in clinical isolate." evidence="16">
    <original>D</original>
    <variation>H</variation>
    <location>
        <position position="94"/>
    </location>
</feature>
<feature type="sequence variant" description="Confers ciprofloxacin resistance, in clinical isolate." evidence="16">
    <original>D</original>
    <variation>N</variation>
    <location>
        <position position="94"/>
    </location>
</feature>
<feature type="sequence variant" description="Confers ciprofloxacin resistance, in clinical isolate." evidence="16">
    <original>D</original>
    <variation>Y</variation>
    <location>
        <position position="94"/>
    </location>
</feature>
<feature type="mutagenesis site" description="Slight resistance to fluoroquinolones. Hypersusceptibile, 2- to 14-fold higher sensitivity to fluoroquinolones, 2- to 8-fold more efficient in fluoroquinolone-induced DNA cleavage; when associated with G-90." evidence="5">
    <original>T</original>
    <variation>A</variation>
    <location>
        <position position="80"/>
    </location>
</feature>
<feature type="mutagenesis site" description="Confers fluoroquinolone resistance, IC(50) is 2- to 26-fold higher than wild-type." evidence="7">
    <original>G</original>
    <variation>A</variation>
    <location>
        <position position="88"/>
    </location>
</feature>
<feature type="mutagenesis site" description="Confers fluoroquinolone resistance, IC(50) is 3- to 43-fold higher than wild-type, in strains H37Ra and H37Rv." evidence="7 16">
    <original>G</original>
    <variation>C</variation>
    <location>
        <position position="88"/>
    </location>
</feature>
<feature type="mutagenesis site" description="80-fold increased resistance to fluoroquinolones, 32- to 64-fold reduction in fluoroquinolone-induced DNA cleavage." evidence="5">
    <original>ASIYD</original>
    <variation>VSIYG</variation>
    <location>
        <begin position="90"/>
        <end position="94"/>
    </location>
</feature>
<feature type="mutagenesis site" description="4- to 16-fold more efficient in fluoroquinolone-induced DNA cleavage alone. Hypersusceptibile, 2- to 14-fold higher sensitivity to fluoroquinolones, 2- to 8-fold more efficient in fluoroquinolone-induced DNA cleavage; when associated with A-80." evidence="5">
    <original>A</original>
    <variation>G</variation>
    <location>
        <position position="90"/>
    </location>
</feature>
<feature type="mutagenesis site" description="Increased susceptibility to fluoroquinolones (makes sequence more like E.coli), supercoiling, relaxation, decatenation activities still inhibited by MfpA." evidence="8 9">
    <original>A</original>
    <variation>S</variation>
    <location>
        <position position="90"/>
    </location>
</feature>
<feature type="mutagenesis site" description="17-fold increased resistance to fluoroquinolones, 4- to 8-fold reduction in fluoroquinolone-induced DNA cleavage." evidence="5">
    <original>A</original>
    <variation>V</variation>
    <location>
        <position position="90"/>
    </location>
</feature>
<feature type="mutagenesis site" description="25- 45-fold increased resistance to fluoroquinolones, 4- to 8-fold reduction in fluoroquinolone-induced DNA cleavage. Supercoiling, relaxation, decatenation activities no longer inhibited by MfpA." evidence="5 9">
    <original>D</original>
    <variation>G</variation>
    <variation>H</variation>
    <location>
        <position position="94"/>
    </location>
</feature>
<feature type="mutagenesis site" description="Confers ofloxacin resistance." evidence="17">
    <original>D</original>
    <variation>H</variation>
    <location>
        <position position="94"/>
    </location>
</feature>
<feature type="mutagenesis site" description="Significant reduction in DNA wrapping and supercoiling activity, no change in decatanation or relaxation activities." evidence="12">
    <original>DVSDEDLIARE</original>
    <variation>AVSDAALIARA</variation>
    <location>
        <begin position="504"/>
        <end position="514"/>
    </location>
</feature>
<feature type="mutagenesis site" description="Slight reduction in supercoiling activity." evidence="12">
    <original>ED</original>
    <variation>AA</variation>
    <location>
        <begin position="508"/>
        <end position="509"/>
    </location>
</feature>
<feature type="mutagenesis site" description="Wild-type decatenase activity (changes residue to match E.coli)." evidence="14">
    <original>K</original>
    <variation>R</variation>
    <location>
        <position position="538"/>
    </location>
</feature>
<feature type="mutagenesis site" description="No supercoiling activity, almost wild-type decatenation activity, wild-type fluoroquinolone-induced DNA cleavage." evidence="14">
    <original>GGKG</original>
    <variation>AAKA</variation>
    <location>
        <begin position="540"/>
        <end position="543"/>
    </location>
</feature>
<feature type="mutagenesis site" description="No change in supercoiling activity, wild-type decatenation or fluoroquinolone-induced DNA cleavage." evidence="14">
    <original>G</original>
    <variation>A</variation>
    <location>
        <position position="540"/>
    </location>
</feature>
<feature type="mutagenesis site" description="Reduced supercoiling activity, wild-type decatenation and fluoroquinolone-induced DNA cleavage." evidence="14">
    <original>G</original>
    <variation>A</variation>
    <location>
        <position position="541"/>
    </location>
</feature>
<feature type="mutagenesis site" description="Reduced supercoiling activity, wild-type decatenation and fluoroquinolone-induced DNA cleavage." evidence="14">
    <original>G</original>
    <variation>A</variation>
    <location>
        <position position="543"/>
    </location>
</feature>
<feature type="mutagenesis site" description="No supercoiling activity, wild-type decatenation and fluoroquinolone-induced DNA cleavage." evidence="14">
    <original>G</original>
    <variation>K</variation>
    <location>
        <position position="543"/>
    </location>
</feature>
<feature type="mutagenesis site" description="Wild-type decatenase activity (changes residues to match E.coli)." evidence="14">
    <original>VQ</original>
    <variation>KS</variation>
    <location>
        <begin position="544"/>
        <end position="545"/>
    </location>
</feature>
<feature type="mutagenesis site" description="No supercoiling or decatenation activity, decreased fluoroquinolone-induced DNA cleavage." evidence="14">
    <original>GGKG</original>
    <variation>AAKA</variation>
    <location>
        <begin position="746"/>
        <end position="749"/>
    </location>
</feature>
<feature type="mutagenesis site" description="Wild-type supercoiling, decatenation and fluoroquinolone-induced DNA cleavage." evidence="14">
    <original>G</original>
    <variation>A</variation>
    <location>
        <position position="746"/>
    </location>
</feature>
<feature type="mutagenesis site" description="Wild-type supercoiling, decatenation and fluoroquinolone-induced DNA cleavage." evidence="14">
    <original>G</original>
    <variation>A</variation>
    <location>
        <position position="747"/>
    </location>
</feature>
<feature type="mutagenesis site" description="No supercoiling or decatenation activity, decreased fluoroquinolone-induced DNA cleavage." evidence="14">
    <original>G</original>
    <variation>A</variation>
    <location>
        <position position="749"/>
    </location>
</feature>
<feature type="sequence conflict" description="In Ref. 4; AAC36878." evidence="20" ref="4">
    <original>N</original>
    <variation>K</variation>
    <location>
        <position position="83"/>
    </location>
</feature>
<feature type="sequence conflict" description="In Ref. 1; AAA83017." evidence="20" ref="1">
    <original>L</original>
    <variation>V</variation>
    <location>
        <position position="712"/>
    </location>
</feature>
<feature type="strand" evidence="29">
    <location>
        <begin position="16"/>
        <end position="19"/>
    </location>
</feature>
<feature type="helix" evidence="30">
    <location>
        <begin position="20"/>
        <end position="37"/>
    </location>
</feature>
<feature type="turn" evidence="26">
    <location>
        <begin position="38"/>
        <end position="40"/>
    </location>
</feature>
<feature type="turn" evidence="26">
    <location>
        <begin position="44"/>
        <end position="46"/>
    </location>
</feature>
<feature type="helix" evidence="26">
    <location>
        <begin position="50"/>
        <end position="62"/>
    </location>
</feature>
<feature type="strand" evidence="30">
    <location>
        <begin position="66"/>
        <end position="68"/>
    </location>
</feature>
<feature type="helix" evidence="26">
    <location>
        <begin position="73"/>
        <end position="83"/>
    </location>
</feature>
<feature type="helix" evidence="26">
    <location>
        <begin position="91"/>
        <end position="100"/>
    </location>
</feature>
<feature type="turn" evidence="26">
    <location>
        <begin position="102"/>
        <end position="104"/>
    </location>
</feature>
<feature type="strand" evidence="26">
    <location>
        <begin position="109"/>
        <end position="114"/>
    </location>
</feature>
<feature type="strand" evidence="26">
    <location>
        <begin position="119"/>
        <end position="121"/>
    </location>
</feature>
<feature type="helix" evidence="29">
    <location>
        <begin position="127"/>
        <end position="129"/>
    </location>
</feature>
<feature type="strand" evidence="26">
    <location>
        <begin position="131"/>
        <end position="134"/>
    </location>
</feature>
<feature type="helix" evidence="26">
    <location>
        <begin position="136"/>
        <end position="142"/>
    </location>
</feature>
<feature type="helix" evidence="26">
    <location>
        <begin position="145"/>
        <end position="147"/>
    </location>
</feature>
<feature type="strand" evidence="26">
    <location>
        <begin position="152"/>
        <end position="154"/>
    </location>
</feature>
<feature type="strand" evidence="26">
    <location>
        <begin position="158"/>
        <end position="165"/>
    </location>
</feature>
<feature type="helix" evidence="26">
    <location>
        <begin position="172"/>
        <end position="176"/>
    </location>
</feature>
<feature type="strand" evidence="29">
    <location>
        <begin position="178"/>
        <end position="181"/>
    </location>
</feature>
<feature type="strand" evidence="29">
    <location>
        <begin position="186"/>
        <end position="189"/>
    </location>
</feature>
<feature type="helix" evidence="26">
    <location>
        <begin position="194"/>
        <end position="206"/>
    </location>
</feature>
<feature type="turn" evidence="26">
    <location>
        <begin position="207"/>
        <end position="209"/>
    </location>
</feature>
<feature type="helix" evidence="26">
    <location>
        <begin position="212"/>
        <end position="222"/>
    </location>
</feature>
<feature type="strand" evidence="26">
    <location>
        <begin position="233"/>
        <end position="235"/>
    </location>
</feature>
<feature type="helix" evidence="26">
    <location>
        <begin position="238"/>
        <end position="246"/>
    </location>
</feature>
<feature type="strand" evidence="26">
    <location>
        <begin position="247"/>
        <end position="254"/>
    </location>
</feature>
<feature type="strand" evidence="26">
    <location>
        <begin position="256"/>
        <end position="261"/>
    </location>
</feature>
<feature type="strand" evidence="29">
    <location>
        <begin position="263"/>
        <end position="265"/>
    </location>
</feature>
<feature type="strand" evidence="26">
    <location>
        <begin position="267"/>
        <end position="273"/>
    </location>
</feature>
<feature type="helix" evidence="26">
    <location>
        <begin position="280"/>
        <end position="292"/>
    </location>
</feature>
<feature type="strand" evidence="26">
    <location>
        <begin position="299"/>
        <end position="304"/>
    </location>
</feature>
<feature type="turn" evidence="26">
    <location>
        <begin position="308"/>
        <end position="310"/>
    </location>
</feature>
<feature type="strand" evidence="26">
    <location>
        <begin position="314"/>
        <end position="318"/>
    </location>
</feature>
<feature type="strand" evidence="30">
    <location>
        <begin position="320"/>
        <end position="322"/>
    </location>
</feature>
<feature type="helix" evidence="26">
    <location>
        <begin position="324"/>
        <end position="334"/>
    </location>
</feature>
<feature type="strand" evidence="26">
    <location>
        <begin position="338"/>
        <end position="344"/>
    </location>
</feature>
<feature type="strand" evidence="26">
    <location>
        <begin position="346"/>
        <end position="349"/>
    </location>
</feature>
<feature type="strand" evidence="26">
    <location>
        <begin position="352"/>
        <end position="355"/>
    </location>
</feature>
<feature type="helix" evidence="26">
    <location>
        <begin position="358"/>
        <end position="399"/>
    </location>
</feature>
<feature type="helix" evidence="26">
    <location>
        <begin position="401"/>
        <end position="410"/>
    </location>
</feature>
<feature type="strand" evidence="30">
    <location>
        <begin position="411"/>
        <end position="413"/>
    </location>
</feature>
<feature type="helix" evidence="26">
    <location>
        <begin position="414"/>
        <end position="425"/>
    </location>
</feature>
<feature type="helix" evidence="26">
    <location>
        <begin position="429"/>
        <end position="436"/>
    </location>
</feature>
<feature type="helix" evidence="26">
    <location>
        <begin position="440"/>
        <end position="443"/>
    </location>
</feature>
<feature type="helix" evidence="26">
    <location>
        <begin position="445"/>
        <end position="470"/>
    </location>
</feature>
<feature type="helix" evidence="26">
    <location>
        <begin position="472"/>
        <end position="490"/>
    </location>
</feature>
<feature type="strand" evidence="26">
    <location>
        <begin position="496"/>
        <end position="499"/>
    </location>
</feature>
<feature type="strand" evidence="28">
    <location>
        <begin position="515"/>
        <end position="521"/>
    </location>
</feature>
<feature type="strand" evidence="28">
    <location>
        <begin position="524"/>
        <end position="530"/>
    </location>
</feature>
<feature type="helix" evidence="28">
    <location>
        <begin position="531"/>
        <end position="534"/>
    </location>
</feature>
<feature type="helix" evidence="28">
    <location>
        <begin position="551"/>
        <end position="553"/>
    </location>
</feature>
<feature type="strand" evidence="28">
    <location>
        <begin position="555"/>
        <end position="562"/>
    </location>
</feature>
<feature type="strand" evidence="28">
    <location>
        <begin position="565"/>
        <end position="571"/>
    </location>
</feature>
<feature type="strand" evidence="28">
    <location>
        <begin position="574"/>
        <end position="580"/>
    </location>
</feature>
<feature type="helix" evidence="28">
    <location>
        <begin position="581"/>
        <end position="583"/>
    </location>
</feature>
<feature type="strand" evidence="27">
    <location>
        <begin position="589"/>
        <end position="591"/>
    </location>
</feature>
<feature type="helix" evidence="28">
    <location>
        <begin position="596"/>
        <end position="599"/>
    </location>
</feature>
<feature type="strand" evidence="28">
    <location>
        <begin position="608"/>
        <end position="616"/>
    </location>
</feature>
<feature type="strand" evidence="28">
    <location>
        <begin position="619"/>
        <end position="627"/>
    </location>
</feature>
<feature type="strand" evidence="28">
    <location>
        <begin position="630"/>
        <end position="636"/>
    </location>
</feature>
<feature type="helix" evidence="28">
    <location>
        <begin position="637"/>
        <end position="640"/>
    </location>
</feature>
<feature type="strand" evidence="28">
    <location>
        <begin position="645"/>
        <end position="650"/>
    </location>
</feature>
<feature type="strand" evidence="28">
    <location>
        <begin position="659"/>
        <end position="665"/>
    </location>
</feature>
<feature type="strand" evidence="28">
    <location>
        <begin position="670"/>
        <end position="675"/>
    </location>
</feature>
<feature type="strand" evidence="28">
    <location>
        <begin position="678"/>
        <end position="684"/>
    </location>
</feature>
<feature type="turn" evidence="28">
    <location>
        <begin position="687"/>
        <end position="689"/>
    </location>
</feature>
<feature type="strand" evidence="28">
    <location>
        <begin position="695"/>
        <end position="697"/>
    </location>
</feature>
<feature type="strand" evidence="28">
    <location>
        <begin position="700"/>
        <end position="702"/>
    </location>
</feature>
<feature type="strand" evidence="28">
    <location>
        <begin position="711"/>
        <end position="716"/>
    </location>
</feature>
<feature type="strand" evidence="28">
    <location>
        <begin position="722"/>
        <end position="727"/>
    </location>
</feature>
<feature type="strand" evidence="28">
    <location>
        <begin position="730"/>
        <end position="736"/>
    </location>
</feature>
<feature type="helix" evidence="28">
    <location>
        <begin position="737"/>
        <end position="739"/>
    </location>
</feature>
<feature type="strand" evidence="28">
    <location>
        <begin position="750"/>
        <end position="753"/>
    </location>
</feature>
<feature type="turn" evidence="28">
    <location>
        <begin position="757"/>
        <end position="759"/>
    </location>
</feature>
<feature type="strand" evidence="28">
    <location>
        <begin position="762"/>
        <end position="768"/>
    </location>
</feature>
<feature type="strand" evidence="28">
    <location>
        <begin position="773"/>
        <end position="781"/>
    </location>
</feature>
<feature type="strand" evidence="28">
    <location>
        <begin position="783"/>
        <end position="787"/>
    </location>
</feature>
<feature type="helix" evidence="28">
    <location>
        <begin position="788"/>
        <end position="790"/>
    </location>
</feature>
<feature type="strand" evidence="28">
    <location>
        <begin position="812"/>
        <end position="818"/>
    </location>
</feature>
<name>GYRA_MYCTU</name>
<sequence length="838" mass="92274">MTDTTLPPDDSLDRIEPVDIEQEMQRSYIDYAMSVIVGRALPEVRDGLKPVHRRVLYAMFDSGFRPDRSHAKSARSVAETMGNYHPHGDASIYDSLVRMAQPWSLRYPLVDGQGNFGSPGNDPPAAMRYTEARLTPLAMEMLREIDEETVDFIPNYDGRVQEPTVLPSRFPNLLANGSGGIAVGMATNIPPHNLRELADAVFWALENHDADEEETLAAVMGRVKGPDFPTAGLIVGSQGTADAYKTGRGSIRMRGVVEVEEDSRGRTSLVITELPYQVNHDNFITSIAEQVRDGKLAGISNIEDQSSDRVGLRIVIEIKRDAVAKVVINNLYKHTQLQTSFGANMLAIVDGVPRTLRLDQLIRYYVDHQLDVIVRRTTYRLRKANERAHILRGLVKALDALDEVIALIRASETVDIARAGLIELLDIDEIQAQAILDMQLRRLAALERQRIIDDLAKIEAEIADLEDILAKPERQRGIVRDELAEIVDRHGDDRRTRIIAADGDVSDEDLIAREDVVVTITETGYAKRTKTDLYRSQKRGGKGVQGAGLKQDDIVAHFFVCSTHDLILFFTTQGRVYRAKAYDLPEASRTARGQHVANLLAFQPEERIAQVIQIRGYTDAPYLVLATRNGLVKKSKLTDFDSNRSGGIVAVNLRDNDELVGAVLCSAGDDLLLVSANGQSIRFSATDEALRPMGRATSGVQGMRFNIDDRLLSLNVVREGTYLLVATSGGYAKRTAIEEYPVQGRGGKGVLTVMYDRRRGRLVGALIVDDDSELYAVTSGGGVIRTAARQVRKAGRQTKGVRLMNLGEGDTLLAIARNAEESGDDNAVDANGADQTGN</sequence>
<evidence type="ECO:0000255" key="1">
    <source>
        <dbReference type="HAMAP-Rule" id="MF_01897"/>
    </source>
</evidence>
<evidence type="ECO:0000255" key="2">
    <source>
        <dbReference type="PROSITE-ProRule" id="PRU01384"/>
    </source>
</evidence>
<evidence type="ECO:0000255" key="3">
    <source>
        <dbReference type="PROSITE-ProRule" id="PRU10142"/>
    </source>
</evidence>
<evidence type="ECO:0000269" key="4">
    <source>
    </source>
</evidence>
<evidence type="ECO:0000269" key="5">
    <source>
    </source>
</evidence>
<evidence type="ECO:0000269" key="6">
    <source>
    </source>
</evidence>
<evidence type="ECO:0000269" key="7">
    <source>
    </source>
</evidence>
<evidence type="ECO:0000269" key="8">
    <source>
    </source>
</evidence>
<evidence type="ECO:0000269" key="9">
    <source>
    </source>
</evidence>
<evidence type="ECO:0000269" key="10">
    <source>
    </source>
</evidence>
<evidence type="ECO:0000269" key="11">
    <source>
    </source>
</evidence>
<evidence type="ECO:0000269" key="12">
    <source>
    </source>
</evidence>
<evidence type="ECO:0000269" key="13">
    <source>
    </source>
</evidence>
<evidence type="ECO:0000269" key="14">
    <source>
    </source>
</evidence>
<evidence type="ECO:0000269" key="15">
    <source>
    </source>
</evidence>
<evidence type="ECO:0000269" key="16">
    <source>
    </source>
</evidence>
<evidence type="ECO:0000269" key="17">
    <source>
    </source>
</evidence>
<evidence type="ECO:0000303" key="18">
    <source>
    </source>
</evidence>
<evidence type="ECO:0000303" key="19">
    <source>
    </source>
</evidence>
<evidence type="ECO:0000305" key="20"/>
<evidence type="ECO:0000305" key="21">
    <source>
    </source>
</evidence>
<evidence type="ECO:0000305" key="22">
    <source>
    </source>
</evidence>
<evidence type="ECO:0000305" key="23">
    <source>
    </source>
</evidence>
<evidence type="ECO:0000305" key="24">
    <source>
    </source>
</evidence>
<evidence type="ECO:0007744" key="25">
    <source>
    </source>
</evidence>
<evidence type="ECO:0007829" key="26">
    <source>
        <dbReference type="PDB" id="3ILW"/>
    </source>
</evidence>
<evidence type="ECO:0007829" key="27">
    <source>
        <dbReference type="PDB" id="3UC1"/>
    </source>
</evidence>
<evidence type="ECO:0007829" key="28">
    <source>
        <dbReference type="PDB" id="4G3N"/>
    </source>
</evidence>
<evidence type="ECO:0007829" key="29">
    <source>
        <dbReference type="PDB" id="5BS8"/>
    </source>
</evidence>
<evidence type="ECO:0007829" key="30">
    <source>
        <dbReference type="PDB" id="6GAU"/>
    </source>
</evidence>
<comment type="function">
    <text evidence="4 5 6 7 8 9 10 11 12 14">A type II topoisomerase that negatively supercoils closed circular double-stranded (ds) DNA in an ATP-dependent manner to maintain chromosomes in an underwound state, while in the absence of ATP it relaxes supercoiled dsDNA (PubMed:15047530, PubMed:16377674, PubMed:16876125, PubMed:17015625, PubMed:18426901, PubMed:19060136, PubMed:20805881, PubMed:22844097). Also catalyzes the interconversion of other topological isomers of dsDNA rings, including catenanes (PubMed:16876125, PubMed:19060136, PubMed:22457352). Gyrase from M.tuberculosis has higher decatenation than supercoiling activity compared to E.coli; as M.tuberculosis only has 1 type II topoisomerase, gyrase has to fulfill the decatenation function of topoisomerase IV as well (PubMed:16876125, PubMed:22457352, PubMed:23869946). At comparable concentrations M.tuberculosis gyrase cannot introduce as many negative supercoils into DNA as the E.coli enzyme, and its ATPase activity is lower, perhaps because it does not couple DNA wrapping and ATP binding as well as E.coli (PubMed:22457352).</text>
</comment>
<comment type="function">
    <text>Negative supercoiling favors strand separation, and DNA replication, transcription, recombination and repair, all of which involve strand separation. Type II topoisomerases break and join 2 DNA strands simultaneously in an ATP-dependent manner.</text>
</comment>
<comment type="catalytic activity">
    <reaction evidence="1 4 6">
        <text>ATP-dependent breakage, passage and rejoining of double-stranded DNA.</text>
        <dbReference type="EC" id="5.6.2.2"/>
    </reaction>
</comment>
<comment type="cofactor">
    <cofactor evidence="12">
        <name>Ca(2+)</name>
        <dbReference type="ChEBI" id="CHEBI:29108"/>
    </cofactor>
    <text evidence="12">May bind up to 2 Ca(2+) per subunit, Ca(2+) does not substitute for supercoiling activity, but is required for relaxation, probably by an interaction with this subunit (PubMed:22844097). This subunit has altered protease sensitivity in the presence of Ca(2+), which might reflect regulation (PubMed:22844097).</text>
</comment>
<comment type="activity regulation">
    <text evidence="4 6 7 9 13 14 15">DNA supercoiling inhibited by (fluoro)quinoline antibiotics such as sparfloxacin and levofloxacin, which usually act on GyrA (PubMed:15047530, PubMed:17015625). DNA supercoiling inhibited by the coumarin antibiotic novobiocin which acts on GyrB (PubMed:16876125). Quinolones lead to gyrase-mediated dsDNA cleavage while preventing reclosure (PubMed:15047530, PubMed:16876125, PubMed:23869946). DNA supercoiling activity inhibited by aminopyrazinamide and pyrrolamide derivatives, probably via effects on the GyrB subunit (PubMed:23268609, PubMed:24126580). DNA relaxation inhibited by ATP and its analogs (PubMed:16876125). DNA supercoiling, relaxation, decatenation and quinolone-promoted DNA cleavage are inhibited by MfpA (50% inhibition occurs at 2 uM), inhibition of gyrase activities is enhanced in a concentration-dependent manner by MfpA (PubMed:19060136).</text>
</comment>
<comment type="subunit">
    <text evidence="1 4">Heterotetramer, composed of two GyrA and two GyrB chains. In the heterotetramer, GyrA contains the active site tyrosine that forms a transient covalent intermediate with DNA, while GyrB binds cofactors and catalyzes ATP hydrolysis (PubMed:15047530).</text>
</comment>
<comment type="subcellular location">
    <subcellularLocation>
        <location evidence="1">Cytoplasm</location>
    </subcellularLocation>
</comment>
<comment type="domain">
    <text evidence="10 11 14">The N-terminal domain (residues 1-502, also called GA57BK) forms a dimer; when reconstituted with intact GyrB or the C-terminus of GyrB (residues 448-675) can catalyze quinolone-mediated DNA breaks (PubMed:20805881). The C-terminal domain (CTD, residues 514-838) contains 6 tandemly repeated subdomains known as blades, each of which is composed of a 4-stranded antiparallel beta-sheet (PubMed:22457352, PubMed:23869946). The blades form a circular-shaped beta-pinwheel fold arranged in a spiral around a screw axis, which binds DNA (PubMed:22457352, PubMed:23869946). Unlike in E.coli, isolated CTD both binds and wraps DNA and is able to introduce writhe into DNA, but the holoenzyme in M.tuberculosis is missing the GyrA acidic tail found in E.coli and thus does not couple DNA wrapping and ATP binding as well as E.coli (PubMed:22457352). There are 2 GyrA-boxes in the CTD; mutations in GyrA-box (residues 537-543, the canonical box) affect supercoiling but not decatenation, those in GyrA-box-1 (residues 743-749, conserved in some Actinobacteria) affect both, suggesting there is a novel DNA-binding pathway in M.tuberculosis compared to E.coli (PubMed:23869946).</text>
</comment>
<comment type="miscellaneous">
    <text evidence="8 21 22 24">When the enzyme transiently cleaves DNA a phosphotyrosine bond is formed between GyrA and DNA (PubMed:15047530). In the presence of quinolones this intermediate can be trapped and is used as an indicator of drug toxicity (PubMed:16377674, PubMed:23869946). DNA gyrase is intrinsically more resistant to fluoroquinolone drugs than in E.coli, mutating it to resemble E.coli increases its susceptibility to fluoroquinolones (most quinolone-resistant mutations are in this subunit) (PubMed:18426901).</text>
</comment>
<comment type="miscellaneous">
    <text evidence="6 14">Gyrase from M.tuberculosis is usually assayed in the presence of potassium glutamate (KGlu); KGlu stimulates supercoiling but inhibits DNA relaxation activity, and has concentration-dependent effects on GyrA-box mutants (PubMed:16876125, PubMed:23869946).</text>
</comment>
<comment type="similarity">
    <text evidence="1">Belongs to the type II topoisomerase GyrA/ParC subunit family.</text>
</comment>
<gene>
    <name evidence="1" type="primary">gyrA</name>
    <name type="ordered locus">Rv0006</name>
    <name type="ORF">MTCY10H4.04</name>
</gene>
<accession>P9WG47</accession>
<accession>J9VB15</accession>
<accession>P71574</accession>
<accession>P97136</accession>
<accession>Q07702</accession>
<organism>
    <name type="scientific">Mycobacterium tuberculosis (strain ATCC 25618 / H37Rv)</name>
    <dbReference type="NCBI Taxonomy" id="83332"/>
    <lineage>
        <taxon>Bacteria</taxon>
        <taxon>Bacillati</taxon>
        <taxon>Actinomycetota</taxon>
        <taxon>Actinomycetes</taxon>
        <taxon>Mycobacteriales</taxon>
        <taxon>Mycobacteriaceae</taxon>
        <taxon>Mycobacterium</taxon>
        <taxon>Mycobacterium tuberculosis complex</taxon>
    </lineage>
</organism>
<protein>
    <recommendedName>
        <fullName evidence="1">DNA gyrase subunit A</fullName>
        <ecNumber evidence="1 4 6">5.6.2.2</ecNumber>
    </recommendedName>
    <alternativeName>
        <fullName>Type IIA topoisomerase subunit GyrA</fullName>
    </alternativeName>
</protein>
<proteinExistence type="evidence at protein level"/>
<reference key="1">
    <citation type="journal article" date="1994" name="Antimicrob. Agents Chemother.">
        <title>Cloning and nucleotide sequence of Mycobacterium tuberculosis gyrA and gyrB genes and detection of quinolone resistance mutations.</title>
        <authorList>
            <person name="Takiff H.E."/>
            <person name="Salazar L."/>
            <person name="Guerrero C."/>
            <person name="Philipp W."/>
            <person name="Huang W.M."/>
            <person name="Kreiswirth B."/>
            <person name="Cole S.T."/>
            <person name="Jacobs W.R. Jr."/>
            <person name="Telenti A."/>
        </authorList>
    </citation>
    <scope>NUCLEOTIDE SEQUENCE [GENOMIC DNA]</scope>
    <scope>VARIANTS VAL-90; PRO-91; ALA-94; GLY-94; HIS-94; ASN-94 AND TYR-94</scope>
    <scope>MUTAGENESIS OF GLY-88</scope>
    <scope>ANTIBIOTIC RESISTANCE</scope>
    <source>
        <strain>ATCC 25618 / H37Rv</strain>
    </source>
</reference>
<reference key="2">
    <citation type="journal article" date="2012" name="J. Clin. Microbiol.">
        <title>Next-generation ion torrent sequencing of drug resistance mutations in Mycobacterium tuberculosis strains.</title>
        <authorList>
            <person name="Daum L.T."/>
            <person name="Rodriguez J.D."/>
            <person name="Worthy S.A."/>
            <person name="Ismail N.A."/>
            <person name="Omar S.V."/>
            <person name="Dreyer A.W."/>
            <person name="Fourie P.B."/>
            <person name="Hoosen A.A."/>
            <person name="Chambers J.P."/>
            <person name="Fischer G.W."/>
        </authorList>
    </citation>
    <scope>NUCLEOTIDE SEQUENCE [GENOMIC DNA]</scope>
    <source>
        <strain>2997164</strain>
    </source>
</reference>
<reference key="3">
    <citation type="journal article" date="1998" name="Nature">
        <title>Deciphering the biology of Mycobacterium tuberculosis from the complete genome sequence.</title>
        <authorList>
            <person name="Cole S.T."/>
            <person name="Brosch R."/>
            <person name="Parkhill J."/>
            <person name="Garnier T."/>
            <person name="Churcher C.M."/>
            <person name="Harris D.E."/>
            <person name="Gordon S.V."/>
            <person name="Eiglmeier K."/>
            <person name="Gas S."/>
            <person name="Barry C.E. III"/>
            <person name="Tekaia F."/>
            <person name="Badcock K."/>
            <person name="Basham D."/>
            <person name="Brown D."/>
            <person name="Chillingworth T."/>
            <person name="Connor R."/>
            <person name="Davies R.M."/>
            <person name="Devlin K."/>
            <person name="Feltwell T."/>
            <person name="Gentles S."/>
            <person name="Hamlin N."/>
            <person name="Holroyd S."/>
            <person name="Hornsby T."/>
            <person name="Jagels K."/>
            <person name="Krogh A."/>
            <person name="McLean J."/>
            <person name="Moule S."/>
            <person name="Murphy L.D."/>
            <person name="Oliver S."/>
            <person name="Osborne J."/>
            <person name="Quail M.A."/>
            <person name="Rajandream M.A."/>
            <person name="Rogers J."/>
            <person name="Rutter S."/>
            <person name="Seeger K."/>
            <person name="Skelton S."/>
            <person name="Squares S."/>
            <person name="Squares R."/>
            <person name="Sulston J.E."/>
            <person name="Taylor K."/>
            <person name="Whitehead S."/>
            <person name="Barrell B.G."/>
        </authorList>
    </citation>
    <scope>NUCLEOTIDE SEQUENCE [LARGE SCALE GENOMIC DNA]</scope>
    <source>
        <strain>ATCC 25618 / H37Rv</strain>
    </source>
</reference>
<reference key="4">
    <citation type="journal article" date="1993" name="Gene">
        <title>A PCR method for the sequence analysis of the gyrA, polA and rnhA gene segments from mycobacteria.</title>
        <authorList>
            <person name="Mizrahi V."/>
            <person name="Huberts P."/>
            <person name="Dawes S.S."/>
            <person name="Dudding L.R."/>
        </authorList>
    </citation>
    <scope>NUCLEOTIDE SEQUENCE [GENOMIC DNA] OF 82-188</scope>
    <source>
        <strain>ATCC 25618 / H37Rv</strain>
    </source>
</reference>
<reference key="5">
    <citation type="journal article" date="1994" name="J. Infect. Dis.">
        <title>Selection of a gyrA mutant of Mycobacterium tuberculosis resistant to fluoroquinolones during treatment with ofloxacin.</title>
        <authorList>
            <person name="Cambau E."/>
            <person name="Sougakoff W."/>
            <person name="Besson M."/>
            <person name="Truffot-Pernot C."/>
            <person name="Grosset J."/>
            <person name="Jarlier V."/>
        </authorList>
    </citation>
    <scope>NUCLEOTIDE SEQUENCE [GENOMIC DNA] OF 89-124</scope>
    <scope>MUTAGENESIS OF ASP-94</scope>
    <scope>ANTIBIOTIC RESISTANCE</scope>
    <source>
        <strain>ATCC 25618 / H37Rv</strain>
    </source>
</reference>
<reference key="6">
    <citation type="journal article" date="2004" name="Antimicrob. Agents Chemother.">
        <title>Mycobacterium tuberculosis DNA gyrase: interaction with quinolones and correlation with antimycobacterial drug activity.</title>
        <authorList>
            <person name="Aubry A."/>
            <person name="Pan X.S."/>
            <person name="Fisher L.M."/>
            <person name="Jarlier V."/>
            <person name="Cambau E."/>
        </authorList>
    </citation>
    <scope>FUNCTION</scope>
    <scope>CATALYTIC ACTIVITY</scope>
    <scope>ACTIVITY REGULATION</scope>
    <scope>SUBUNIT</scope>
    <scope>REACTION MECHANISM</scope>
    <source>
        <strain>ATCC 25618 / H37Rv</strain>
    </source>
</reference>
<reference key="7">
    <citation type="journal article" date="2006" name="Antimicrob. Agents Chemother.">
        <title>Novel gyrase mutations in quinolone-resistant and -hypersusceptible clinical isolates of Mycobacterium tuberculosis: functional analysis of mutant enzymes.</title>
        <authorList>
            <person name="Aubry A."/>
            <person name="Veziris N."/>
            <person name="Cambau E."/>
            <person name="Truffot-Pernot C."/>
            <person name="Jarlier V."/>
            <person name="Fisher L.M."/>
        </authorList>
    </citation>
    <scope>FUNCTION</scope>
    <scope>MUTAGENESIS OF THR-80; ALA-90 AND ASP-94</scope>
    <scope>ANTIBIOTIC RESISTANCE</scope>
    <source>
        <strain>H37Rv</strain>
    </source>
</reference>
<reference key="8">
    <citation type="journal article" date="2006" name="Biochem. Biophys. Res. Commun.">
        <title>First functional characterization of a singly expressed bacterial type II topoisomerase: the enzyme from Mycobacterium tuberculosis.</title>
        <authorList>
            <person name="Aubry A."/>
            <person name="Fisher L.M."/>
            <person name="Jarlier V."/>
            <person name="Cambau E."/>
        </authorList>
    </citation>
    <scope>FUNCTION</scope>
    <scope>CATALYTIC ACTIVITY</scope>
    <scope>ACTIVITY REGULATION</scope>
    <source>
        <strain>H37Rv</strain>
    </source>
</reference>
<reference key="9">
    <citation type="journal article" date="2006" name="Antimicrob. Agents Chemother.">
        <title>Functional analysis of DNA gyrase mutant enzymes carrying mutations at position 88 in the A subunit found in clinical strains of Mycobacterium tuberculosis resistant to fluoroquinolones.</title>
        <authorList>
            <person name="Matrat S."/>
            <person name="Veziris N."/>
            <person name="Mayer C."/>
            <person name="Jarlier V."/>
            <person name="Truffot-Pernot C."/>
            <person name="Camuset J."/>
            <person name="Bouvet E."/>
            <person name="Cambau E."/>
            <person name="Aubry A."/>
        </authorList>
    </citation>
    <scope>FUNCTION</scope>
    <scope>ACTIVITY REGULATION</scope>
    <scope>MUTAGENESIS OF GLY-88</scope>
    <scope>ANTIBIOTIC-RESISTANCE</scope>
    <source>
        <strain>H37Rv</strain>
    </source>
</reference>
<reference key="10">
    <citation type="journal article" date="2008" name="Antimicrob. Agents Chemother.">
        <title>Mutagenesis in the alpha3alpha4 GyrA helix and in the Toprim domain of GyrB refines the contribution of Mycobacterium tuberculosis DNA gyrase to intrinsic resistance to quinolones.</title>
        <authorList>
            <person name="Matrat S."/>
            <person name="Aubry A."/>
            <person name="Mayer C."/>
            <person name="Jarlier V."/>
            <person name="Cambau E."/>
        </authorList>
    </citation>
    <scope>FUNCTION</scope>
    <scope>MUTAGENESIS OF ALA-90</scope>
    <scope>ANTIBIOTIC SUSCEPTIBILITY</scope>
</reference>
<reference key="11">
    <citation type="journal article" date="2009" name="J. Bacteriol.">
        <title>The pentapeptide repeat proteins MfpAMt and QnrB4 exhibit opposite effects on DNA gyrase catalytic reactions and on the ternary gyrase-DNA-quinolone complex.</title>
        <authorList>
            <person name="Merens A."/>
            <person name="Matrat S."/>
            <person name="Aubry A."/>
            <person name="Lascols C."/>
            <person name="Jarlier V."/>
            <person name="Soussy C.J."/>
            <person name="Cavallo J.D."/>
            <person name="Cambau E."/>
        </authorList>
    </citation>
    <scope>FUNCTION</scope>
    <scope>ACTIVITY REGULATION</scope>
    <scope>MUTAGENESIS OF ALA-90 AND ASP-94</scope>
    <source>
        <strain>H37Rv</strain>
    </source>
</reference>
<reference key="12">
    <citation type="journal article" date="2011" name="Mol. Cell. Proteomics">
        <title>Proteogenomic analysis of Mycobacterium tuberculosis by high resolution mass spectrometry.</title>
        <authorList>
            <person name="Kelkar D.S."/>
            <person name="Kumar D."/>
            <person name="Kumar P."/>
            <person name="Balakrishnan L."/>
            <person name="Muthusamy B."/>
            <person name="Yadav A.K."/>
            <person name="Shrivastava P."/>
            <person name="Marimuthu A."/>
            <person name="Anand S."/>
            <person name="Sundaram H."/>
            <person name="Kingsbury R."/>
            <person name="Harsha H.C."/>
            <person name="Nair B."/>
            <person name="Prasad T.S."/>
            <person name="Chauhan D.S."/>
            <person name="Katoch K."/>
            <person name="Katoch V.M."/>
            <person name="Kumar P."/>
            <person name="Chaerkady R."/>
            <person name="Ramachandran S."/>
            <person name="Dash D."/>
            <person name="Pandey A."/>
        </authorList>
    </citation>
    <scope>ACETYLATION [LARGE SCALE ANALYSIS] AT THR-2</scope>
    <scope>CLEAVAGE OF INITIATOR METHIONINE [LARGE SCALE ANALYSIS]</scope>
    <scope>IDENTIFICATION BY MASS SPECTROMETRY [LARGE SCALE ANALYSIS]</scope>
    <source>
        <strain>ATCC 25618 / H37Rv</strain>
    </source>
</reference>
<reference key="13">
    <citation type="journal article" date="2012" name="Nucleic Acids Res.">
        <title>The role of Ca(2+) in the activity of Mycobacterium tuberculosis DNA gyrase.</title>
        <authorList>
            <person name="Karkare S."/>
            <person name="Yousafzai F."/>
            <person name="Mitchenall L.A."/>
            <person name="Maxwell A."/>
        </authorList>
    </citation>
    <scope>FUNCTION</scope>
    <scope>POSSIBLE CALCIUM COFACTOR</scope>
    <scope>POSSIBLE EF-HAND DOMAIN</scope>
    <scope>MUTAGENESIS OF 504-ASP--ASP-514 AND 508-GLU-ASP-509</scope>
</reference>
<reference key="14">
    <citation type="journal article" date="2013" name="ACS Chem. Biol.">
        <title>Aminopyrazinamides: novel and specific GyrB inhibitors that kill replicating and nonreplicating Mycobacterium tuberculosis.</title>
        <authorList>
            <person name="Shirude P.S."/>
            <person name="Madhavapeddi P."/>
            <person name="Tucker J.A."/>
            <person name="Murugan K."/>
            <person name="Patil V."/>
            <person name="Basavarajappa H."/>
            <person name="Raichurkar A.V."/>
            <person name="Humnabadkar V."/>
            <person name="Hussein S."/>
            <person name="Sharma S."/>
            <person name="Ramya V.K."/>
            <person name="Narayan C.B."/>
            <person name="Balganesh T.S."/>
            <person name="Sambandamurthy V.K."/>
        </authorList>
    </citation>
    <scope>ACTIVITY REGULATION</scope>
    <source>
        <strain>H37Rv</strain>
    </source>
</reference>
<reference key="15">
    <citation type="journal article" date="2014" name="Antimicrob. Agents Chemother.">
        <title>Optimization of pyrrolamides as mycobacterial GyrB ATPase inhibitors: structure-activity relationship and in vivo efficacy in a mouse model of tuberculosis.</title>
        <authorList>
            <person name="P S.H."/>
            <person name="Solapure S."/>
            <person name="Mukherjee K."/>
            <person name="Nandi V."/>
            <person name="Waterson D."/>
            <person name="Shandil R."/>
            <person name="Balganesh M."/>
            <person name="Sambandamurthy V.K."/>
            <person name="Raichurkar A.K."/>
            <person name="Deshpande A."/>
            <person name="Ghosh A."/>
            <person name="Awasthy D."/>
            <person name="Shanbhag G."/>
            <person name="Sheikh G."/>
            <person name="McMiken H."/>
            <person name="Puttur J."/>
            <person name="Reddy J."/>
            <person name="Werngren J."/>
            <person name="Read J."/>
            <person name="Kumar M."/>
            <person name="R M."/>
            <person name="Chinnapattu M."/>
            <person name="Madhavapeddi P."/>
            <person name="Manjrekar P."/>
            <person name="Basu R."/>
            <person name="Gaonkar S."/>
            <person name="Sharma S."/>
            <person name="Hoffner S."/>
            <person name="Humnabadkar V."/>
            <person name="Subbulakshmi V."/>
            <person name="Panduga V."/>
        </authorList>
    </citation>
    <scope>ACTIVITY REGULATION</scope>
    <source>
        <strain>ATCC 27294 / TMC 102 / H37Rv</strain>
    </source>
</reference>
<reference key="16">
    <citation type="journal article" date="2010" name="Proteins">
        <title>Crystal structure of the DNA gyrase GyrA N-terminal domain from Mycobacterium tuberculosis.</title>
        <authorList>
            <person name="Tretter E.M."/>
            <person name="Schoeffler A.J."/>
            <person name="Weisfield S.R."/>
            <person name="Berger J.M."/>
        </authorList>
    </citation>
    <scope>X-RAY CRYSTALLOGRAPHY (1.60 ANGSTROMS) OF 34-500</scope>
</reference>
<reference key="17">
    <citation type="journal article" date="2010" name="PLoS ONE">
        <title>Structural insights into the quinolone resistance mechanism of Mycobacterium tuberculosis DNA gyrase.</title>
        <authorList>
            <person name="Piton J."/>
            <person name="Petrella S."/>
            <person name="Delarue M."/>
            <person name="Andre-Leroux G."/>
            <person name="Jarlier V."/>
            <person name="Aubry A."/>
            <person name="Mayer C."/>
        </authorList>
    </citation>
    <scope>X-RAY CRYSTALLOGRAPHY (2.70 ANGSTROMS) OF 1-501</scope>
    <scope>FUNCTION</scope>
    <scope>DOMAIN</scope>
</reference>
<reference key="18">
    <citation type="journal article" date="2012" name="J. Biol. Chem.">
        <title>Mechanisms for defining supercoiling set point of DNA gyrase orthologs: II. The shape of the GyrA subunit C-terminal domain (CTD) is not a sole determinant for controlling supercoiling efficiency.</title>
        <authorList>
            <person name="Tretter E.M."/>
            <person name="Berger J.M."/>
        </authorList>
    </citation>
    <scope>X-RAY CRYSTALLOGRAPHY (1.65 ANGSTROMS) OF 514-838</scope>
    <scope>FUNCTION</scope>
    <scope>DOMAIN</scope>
    <scope>DNA-BINDING</scope>
    <source>
        <strain>ATCC 25618 / H37Rv</strain>
    </source>
</reference>
<reference key="19">
    <citation type="journal article" date="2013" name="Biochem. J.">
        <title>Mycobacterium tuberculosis DNA gyrase possesses two functional GyrA-boxes.</title>
        <authorList>
            <person name="Bouige A."/>
            <person name="Darmon A."/>
            <person name="Piton J."/>
            <person name="Roue M."/>
            <person name="Petrella S."/>
            <person name="Capton E."/>
            <person name="Forterre P."/>
            <person name="Aubry A."/>
            <person name="Mayer C."/>
        </authorList>
    </citation>
    <scope>X-RAY CRYSTALLOGRAPHY (1.40 ANGSTROMS) OF 512-838</scope>
    <scope>FUNCTION</scope>
    <scope>DOMAIN</scope>
    <scope>DNA-BINDING</scope>
    <scope>MUTAGENESIS OF LYS-538; 540-GLY--GLY-543; GLY-540; GLY-541; GLY-543; 544-VAL-GLN-545; 746-GLY--GLY-749; GLY-747; GLY-749 AND GLY-749</scope>
    <source>
        <strain>H37Rv</strain>
    </source>
</reference>
<dbReference type="EC" id="5.6.2.2" evidence="1 4 6"/>
<dbReference type="EMBL" id="L27512">
    <property type="protein sequence ID" value="AAA83017.1"/>
    <property type="molecule type" value="Genomic_DNA"/>
</dbReference>
<dbReference type="EMBL" id="JX303241">
    <property type="protein sequence ID" value="AFR90330.1"/>
    <property type="molecule type" value="Genomic_DNA"/>
</dbReference>
<dbReference type="EMBL" id="AL123456">
    <property type="protein sequence ID" value="CCP42728.1"/>
    <property type="molecule type" value="Genomic_DNA"/>
</dbReference>
<dbReference type="EMBL" id="L11919">
    <property type="protein sequence ID" value="AAC36878.1"/>
    <property type="molecule type" value="Unassigned_DNA"/>
</dbReference>
<dbReference type="EMBL" id="X72872">
    <property type="protein sequence ID" value="CAA51386.1"/>
    <property type="molecule type" value="Genomic_DNA"/>
</dbReference>
<dbReference type="PIR" id="D70698">
    <property type="entry name" value="D70698"/>
</dbReference>
<dbReference type="RefSeq" id="NP_214520.1">
    <property type="nucleotide sequence ID" value="NC_000962.3"/>
</dbReference>
<dbReference type="RefSeq" id="WP_003917265.1">
    <property type="nucleotide sequence ID" value="NZ_NVQJ01000005.1"/>
</dbReference>
<dbReference type="PDB" id="3IFZ">
    <property type="method" value="X-ray"/>
    <property type="resolution" value="2.70 A"/>
    <property type="chains" value="A/B=1-501"/>
</dbReference>
<dbReference type="PDB" id="3ILW">
    <property type="method" value="X-ray"/>
    <property type="resolution" value="1.60 A"/>
    <property type="chains" value="A/B=34-500"/>
</dbReference>
<dbReference type="PDB" id="3UC1">
    <property type="method" value="X-ray"/>
    <property type="resolution" value="1.65 A"/>
    <property type="chains" value="A=514-838"/>
</dbReference>
<dbReference type="PDB" id="4G3N">
    <property type="method" value="X-ray"/>
    <property type="resolution" value="1.40 A"/>
    <property type="chains" value="A=512-838"/>
</dbReference>
<dbReference type="PDB" id="5BS8">
    <property type="method" value="X-ray"/>
    <property type="resolution" value="2.40 A"/>
    <property type="chains" value="A/C=2-500"/>
</dbReference>
<dbReference type="PDB" id="5BTA">
    <property type="method" value="X-ray"/>
    <property type="resolution" value="2.55 A"/>
    <property type="chains" value="A/C=2-500"/>
</dbReference>
<dbReference type="PDB" id="5BTC">
    <property type="method" value="X-ray"/>
    <property type="resolution" value="2.55 A"/>
    <property type="chains" value="A/C=2-500"/>
</dbReference>
<dbReference type="PDB" id="5BTD">
    <property type="method" value="X-ray"/>
    <property type="resolution" value="2.50 A"/>
    <property type="chains" value="A/C=2-500"/>
</dbReference>
<dbReference type="PDB" id="5BTF">
    <property type="method" value="X-ray"/>
    <property type="resolution" value="2.61 A"/>
    <property type="chains" value="A/C=2-500"/>
</dbReference>
<dbReference type="PDB" id="5BTG">
    <property type="method" value="X-ray"/>
    <property type="resolution" value="2.50 A"/>
    <property type="chains" value="A/C=2-500"/>
</dbReference>
<dbReference type="PDB" id="5BTI">
    <property type="method" value="X-ray"/>
    <property type="resolution" value="2.50 A"/>
    <property type="chains" value="A/C=2-500"/>
</dbReference>
<dbReference type="PDB" id="5BTL">
    <property type="method" value="X-ray"/>
    <property type="resolution" value="2.50 A"/>
    <property type="chains" value="A/C=2-500"/>
</dbReference>
<dbReference type="PDB" id="5BTN">
    <property type="method" value="X-ray"/>
    <property type="resolution" value="2.50 A"/>
    <property type="chains" value="A/C=2-500"/>
</dbReference>
<dbReference type="PDB" id="6GAU">
    <property type="method" value="X-ray"/>
    <property type="resolution" value="3.30 A"/>
    <property type="chains" value="A/B=2-501"/>
</dbReference>
<dbReference type="PDB" id="6GAV">
    <property type="method" value="X-ray"/>
    <property type="resolution" value="2.60 A"/>
    <property type="chains" value="A/B=2-501"/>
</dbReference>
<dbReference type="PDB" id="7UGW">
    <property type="method" value="X-ray"/>
    <property type="resolution" value="3.00 A"/>
    <property type="chains" value="A/C=2-501"/>
</dbReference>
<dbReference type="PDB" id="9FOY">
    <property type="method" value="X-ray"/>
    <property type="resolution" value="2.80 A"/>
    <property type="chains" value="A/B=2-500"/>
</dbReference>
<dbReference type="PDBsum" id="3IFZ"/>
<dbReference type="PDBsum" id="3ILW"/>
<dbReference type="PDBsum" id="3UC1"/>
<dbReference type="PDBsum" id="4G3N"/>
<dbReference type="PDBsum" id="5BS8"/>
<dbReference type="PDBsum" id="5BTA"/>
<dbReference type="PDBsum" id="5BTC"/>
<dbReference type="PDBsum" id="5BTD"/>
<dbReference type="PDBsum" id="5BTF"/>
<dbReference type="PDBsum" id="5BTG"/>
<dbReference type="PDBsum" id="5BTI"/>
<dbReference type="PDBsum" id="5BTL"/>
<dbReference type="PDBsum" id="5BTN"/>
<dbReference type="PDBsum" id="6GAU"/>
<dbReference type="PDBsum" id="6GAV"/>
<dbReference type="PDBsum" id="7UGW"/>
<dbReference type="PDBsum" id="9FOY"/>
<dbReference type="SMR" id="P9WG47"/>
<dbReference type="FunCoup" id="P9WG47">
    <property type="interactions" value="220"/>
</dbReference>
<dbReference type="STRING" id="83332.Rv0006"/>
<dbReference type="BindingDB" id="P9WG47"/>
<dbReference type="ChEMBL" id="CHEMBL4165"/>
<dbReference type="DrugCentral" id="P9WG47"/>
<dbReference type="iPTMnet" id="P9WG47"/>
<dbReference type="PaxDb" id="83332-Rv0006"/>
<dbReference type="DNASU" id="887105"/>
<dbReference type="GeneID" id="887105"/>
<dbReference type="KEGG" id="mtu:Rv0006"/>
<dbReference type="KEGG" id="mtv:RVBD_0006"/>
<dbReference type="TubercuList" id="Rv0006"/>
<dbReference type="eggNOG" id="COG0188">
    <property type="taxonomic scope" value="Bacteria"/>
</dbReference>
<dbReference type="InParanoid" id="P9WG47"/>
<dbReference type="OrthoDB" id="9806486at2"/>
<dbReference type="PhylomeDB" id="P9WG47"/>
<dbReference type="BRENDA" id="5.6.2.2">
    <property type="organism ID" value="3445"/>
</dbReference>
<dbReference type="EvolutionaryTrace" id="P9WG47"/>
<dbReference type="PRO" id="PR:P9WG47"/>
<dbReference type="Proteomes" id="UP000001584">
    <property type="component" value="Chromosome"/>
</dbReference>
<dbReference type="GO" id="GO:0005694">
    <property type="term" value="C:chromosome"/>
    <property type="evidence" value="ECO:0007669"/>
    <property type="project" value="InterPro"/>
</dbReference>
<dbReference type="GO" id="GO:0005737">
    <property type="term" value="C:cytoplasm"/>
    <property type="evidence" value="ECO:0000318"/>
    <property type="project" value="GO_Central"/>
</dbReference>
<dbReference type="GO" id="GO:0009330">
    <property type="term" value="C:DNA topoisomerase type II (double strand cut, ATP-hydrolyzing) complex"/>
    <property type="evidence" value="ECO:0000318"/>
    <property type="project" value="GO_Central"/>
</dbReference>
<dbReference type="GO" id="GO:0009274">
    <property type="term" value="C:peptidoglycan-based cell wall"/>
    <property type="evidence" value="ECO:0007005"/>
    <property type="project" value="MTBBASE"/>
</dbReference>
<dbReference type="GO" id="GO:0005886">
    <property type="term" value="C:plasma membrane"/>
    <property type="evidence" value="ECO:0007005"/>
    <property type="project" value="MTBBASE"/>
</dbReference>
<dbReference type="GO" id="GO:0005524">
    <property type="term" value="F:ATP binding"/>
    <property type="evidence" value="ECO:0000314"/>
    <property type="project" value="MTBBASE"/>
</dbReference>
<dbReference type="GO" id="GO:0016887">
    <property type="term" value="F:ATP hydrolysis activity"/>
    <property type="evidence" value="ECO:0000314"/>
    <property type="project" value="MTBBASE"/>
</dbReference>
<dbReference type="GO" id="GO:0003677">
    <property type="term" value="F:DNA binding"/>
    <property type="evidence" value="ECO:0000318"/>
    <property type="project" value="GO_Central"/>
</dbReference>
<dbReference type="GO" id="GO:0034335">
    <property type="term" value="F:DNA negative supercoiling activity"/>
    <property type="evidence" value="ECO:0000314"/>
    <property type="project" value="UniProtKB"/>
</dbReference>
<dbReference type="GO" id="GO:0003918">
    <property type="term" value="F:DNA topoisomerase type II (double strand cut, ATP-hydrolyzing) activity"/>
    <property type="evidence" value="ECO:0000314"/>
    <property type="project" value="MTBBASE"/>
</dbReference>
<dbReference type="GO" id="GO:0000287">
    <property type="term" value="F:magnesium ion binding"/>
    <property type="evidence" value="ECO:0000314"/>
    <property type="project" value="MTBBASE"/>
</dbReference>
<dbReference type="GO" id="GO:0006265">
    <property type="term" value="P:DNA topological change"/>
    <property type="evidence" value="ECO:0000314"/>
    <property type="project" value="MTBBASE"/>
</dbReference>
<dbReference type="GO" id="GO:0006261">
    <property type="term" value="P:DNA-templated DNA replication"/>
    <property type="evidence" value="ECO:0007669"/>
    <property type="project" value="UniProtKB-UniRule"/>
</dbReference>
<dbReference type="GO" id="GO:0046677">
    <property type="term" value="P:response to antibiotic"/>
    <property type="evidence" value="ECO:0007669"/>
    <property type="project" value="UniProtKB-KW"/>
</dbReference>
<dbReference type="CDD" id="cd00187">
    <property type="entry name" value="TOP4c"/>
    <property type="match status" value="1"/>
</dbReference>
<dbReference type="FunFam" id="1.10.268.10:FF:000001">
    <property type="entry name" value="DNA gyrase subunit A"/>
    <property type="match status" value="1"/>
</dbReference>
<dbReference type="FunFam" id="2.120.10.90:FF:000001">
    <property type="entry name" value="DNA gyrase subunit A"/>
    <property type="match status" value="1"/>
</dbReference>
<dbReference type="FunFam" id="3.90.199.10:FF:000010">
    <property type="entry name" value="DNA gyrase subunit A"/>
    <property type="match status" value="1"/>
</dbReference>
<dbReference type="FunFam" id="3.30.1360.40:FF:000008">
    <property type="entry name" value="DNA topoisomerase (ATP-hydrolyzing)"/>
    <property type="match status" value="1"/>
</dbReference>
<dbReference type="Gene3D" id="3.30.1360.40">
    <property type="match status" value="1"/>
</dbReference>
<dbReference type="Gene3D" id="2.120.10.90">
    <property type="entry name" value="DNA gyrase/topoisomerase IV, subunit A, C-terminal"/>
    <property type="match status" value="1"/>
</dbReference>
<dbReference type="Gene3D" id="3.90.199.10">
    <property type="entry name" value="Topoisomerase II, domain 5"/>
    <property type="match status" value="1"/>
</dbReference>
<dbReference type="Gene3D" id="1.10.268.10">
    <property type="entry name" value="Topoisomerase, domain 3"/>
    <property type="match status" value="1"/>
</dbReference>
<dbReference type="HAMAP" id="MF_01897">
    <property type="entry name" value="GyrA"/>
    <property type="match status" value="1"/>
</dbReference>
<dbReference type="InterPro" id="IPR005743">
    <property type="entry name" value="GyrA"/>
</dbReference>
<dbReference type="InterPro" id="IPR006691">
    <property type="entry name" value="GyrA/parC_rep"/>
</dbReference>
<dbReference type="InterPro" id="IPR035516">
    <property type="entry name" value="Gyrase/topoIV_suA_C"/>
</dbReference>
<dbReference type="InterPro" id="IPR013760">
    <property type="entry name" value="Topo_IIA-like_dom_sf"/>
</dbReference>
<dbReference type="InterPro" id="IPR013758">
    <property type="entry name" value="Topo_IIA_A/C_ab"/>
</dbReference>
<dbReference type="InterPro" id="IPR013757">
    <property type="entry name" value="Topo_IIA_A_a_sf"/>
</dbReference>
<dbReference type="InterPro" id="IPR002205">
    <property type="entry name" value="Topo_IIA_dom_A"/>
</dbReference>
<dbReference type="InterPro" id="IPR050220">
    <property type="entry name" value="Type_II_DNA_Topoisomerases"/>
</dbReference>
<dbReference type="NCBIfam" id="TIGR01063">
    <property type="entry name" value="gyrA"/>
    <property type="match status" value="1"/>
</dbReference>
<dbReference type="NCBIfam" id="NF004043">
    <property type="entry name" value="PRK05560.1"/>
    <property type="match status" value="1"/>
</dbReference>
<dbReference type="NCBIfam" id="NF004044">
    <property type="entry name" value="PRK05561.1"/>
    <property type="match status" value="1"/>
</dbReference>
<dbReference type="PANTHER" id="PTHR43493:SF5">
    <property type="entry name" value="DNA GYRASE SUBUNIT A, CHLOROPLASTIC_MITOCHONDRIAL"/>
    <property type="match status" value="1"/>
</dbReference>
<dbReference type="PANTHER" id="PTHR43493">
    <property type="entry name" value="DNA GYRASE/TOPOISOMERASE SUBUNIT A"/>
    <property type="match status" value="1"/>
</dbReference>
<dbReference type="Pfam" id="PF03989">
    <property type="entry name" value="DNA_gyraseA_C"/>
    <property type="match status" value="6"/>
</dbReference>
<dbReference type="Pfam" id="PF00521">
    <property type="entry name" value="DNA_topoisoIV"/>
    <property type="match status" value="1"/>
</dbReference>
<dbReference type="SMART" id="SM00434">
    <property type="entry name" value="TOP4c"/>
    <property type="match status" value="1"/>
</dbReference>
<dbReference type="SUPFAM" id="SSF101904">
    <property type="entry name" value="GyrA/ParC C-terminal domain-like"/>
    <property type="match status" value="1"/>
</dbReference>
<dbReference type="SUPFAM" id="SSF56719">
    <property type="entry name" value="Type II DNA topoisomerase"/>
    <property type="match status" value="1"/>
</dbReference>
<dbReference type="PROSITE" id="PS00018">
    <property type="entry name" value="EF_HAND_1"/>
    <property type="match status" value="1"/>
</dbReference>
<dbReference type="PROSITE" id="PS52040">
    <property type="entry name" value="TOPO_IIA"/>
    <property type="match status" value="1"/>
</dbReference>
<keyword id="KW-0002">3D-structure</keyword>
<keyword id="KW-0007">Acetylation</keyword>
<keyword id="KW-0046">Antibiotic resistance</keyword>
<keyword id="KW-0067">ATP-binding</keyword>
<keyword id="KW-0106">Calcium</keyword>
<keyword id="KW-0963">Cytoplasm</keyword>
<keyword id="KW-0238">DNA-binding</keyword>
<keyword id="KW-0413">Isomerase</keyword>
<keyword id="KW-0479">Metal-binding</keyword>
<keyword id="KW-0547">Nucleotide-binding</keyword>
<keyword id="KW-1185">Reference proteome</keyword>
<keyword id="KW-0799">Topoisomerase</keyword>